<proteinExistence type="inferred from homology"/>
<evidence type="ECO:0000255" key="1">
    <source>
        <dbReference type="HAMAP-Rule" id="MF_00048"/>
    </source>
</evidence>
<accession>B2RLS5</accession>
<sequence>MADHNDRGRQGEEIALKHLRQQGYQIEALNWQSGRRELDIVASTSRELVVVEVKTRTEGFLLAPEEAVDARKRRLISESAHHYVRMYAIDLPVRFDVISVVLSADGSCKRIEHRENAFPLLLKRSQRSTPRRRRL</sequence>
<organism>
    <name type="scientific">Porphyromonas gingivalis (strain ATCC 33277 / DSM 20709 / CIP 103683 / JCM 12257 / NCTC 11834 / 2561)</name>
    <dbReference type="NCBI Taxonomy" id="431947"/>
    <lineage>
        <taxon>Bacteria</taxon>
        <taxon>Pseudomonadati</taxon>
        <taxon>Bacteroidota</taxon>
        <taxon>Bacteroidia</taxon>
        <taxon>Bacteroidales</taxon>
        <taxon>Porphyromonadaceae</taxon>
        <taxon>Porphyromonas</taxon>
    </lineage>
</organism>
<comment type="similarity">
    <text evidence="1">Belongs to the UPF0102 family.</text>
</comment>
<protein>
    <recommendedName>
        <fullName evidence="1">UPF0102 protein PGN_1801</fullName>
    </recommendedName>
</protein>
<name>Y1801_PORG3</name>
<feature type="chain" id="PRO_1000091252" description="UPF0102 protein PGN_1801">
    <location>
        <begin position="1"/>
        <end position="135"/>
    </location>
</feature>
<reference key="1">
    <citation type="journal article" date="2008" name="DNA Res.">
        <title>Determination of the genome sequence of Porphyromonas gingivalis strain ATCC 33277 and genomic comparison with strain W83 revealed extensive genome rearrangements in P. gingivalis.</title>
        <authorList>
            <person name="Naito M."/>
            <person name="Hirakawa H."/>
            <person name="Yamashita A."/>
            <person name="Ohara N."/>
            <person name="Shoji M."/>
            <person name="Yukitake H."/>
            <person name="Nakayama K."/>
            <person name="Toh H."/>
            <person name="Yoshimura F."/>
            <person name="Kuhara S."/>
            <person name="Hattori M."/>
            <person name="Hayashi T."/>
            <person name="Nakayama K."/>
        </authorList>
    </citation>
    <scope>NUCLEOTIDE SEQUENCE [LARGE SCALE GENOMIC DNA]</scope>
    <source>
        <strain>ATCC 33277 / DSM 20709 / CIP 103683 / JCM 12257 / NCTC 11834 / 2561</strain>
    </source>
</reference>
<dbReference type="EMBL" id="AP009380">
    <property type="protein sequence ID" value="BAG34320.1"/>
    <property type="molecule type" value="Genomic_DNA"/>
</dbReference>
<dbReference type="RefSeq" id="WP_004583537.1">
    <property type="nucleotide sequence ID" value="NZ_CP025930.1"/>
</dbReference>
<dbReference type="SMR" id="B2RLS5"/>
<dbReference type="GeneID" id="29256956"/>
<dbReference type="KEGG" id="pgn:PGN_1801"/>
<dbReference type="eggNOG" id="COG0792">
    <property type="taxonomic scope" value="Bacteria"/>
</dbReference>
<dbReference type="HOGENOM" id="CLU_115353_2_1_10"/>
<dbReference type="OrthoDB" id="9802516at2"/>
<dbReference type="BioCyc" id="PGIN431947:G1G2V-2011-MONOMER"/>
<dbReference type="Proteomes" id="UP000008842">
    <property type="component" value="Chromosome"/>
</dbReference>
<dbReference type="GO" id="GO:0003676">
    <property type="term" value="F:nucleic acid binding"/>
    <property type="evidence" value="ECO:0007669"/>
    <property type="project" value="InterPro"/>
</dbReference>
<dbReference type="Gene3D" id="3.40.1350.10">
    <property type="match status" value="1"/>
</dbReference>
<dbReference type="HAMAP" id="MF_00048">
    <property type="entry name" value="UPF0102"/>
    <property type="match status" value="1"/>
</dbReference>
<dbReference type="InterPro" id="IPR011335">
    <property type="entry name" value="Restrct_endonuc-II-like"/>
</dbReference>
<dbReference type="InterPro" id="IPR011856">
    <property type="entry name" value="tRNA_endonuc-like_dom_sf"/>
</dbReference>
<dbReference type="InterPro" id="IPR003509">
    <property type="entry name" value="UPF0102_YraN-like"/>
</dbReference>
<dbReference type="PANTHER" id="PTHR34039">
    <property type="entry name" value="UPF0102 PROTEIN YRAN"/>
    <property type="match status" value="1"/>
</dbReference>
<dbReference type="PANTHER" id="PTHR34039:SF1">
    <property type="entry name" value="UPF0102 PROTEIN YRAN"/>
    <property type="match status" value="1"/>
</dbReference>
<dbReference type="Pfam" id="PF02021">
    <property type="entry name" value="UPF0102"/>
    <property type="match status" value="1"/>
</dbReference>
<dbReference type="SUPFAM" id="SSF52980">
    <property type="entry name" value="Restriction endonuclease-like"/>
    <property type="match status" value="1"/>
</dbReference>
<gene>
    <name type="ordered locus">PGN_1801</name>
</gene>